<organism>
    <name type="scientific">Mycoplasma genitalium (strain ATCC 33530 / DSM 19775 / NCTC 10195 / G37)</name>
    <name type="common">Mycoplasmoides genitalium</name>
    <dbReference type="NCBI Taxonomy" id="243273"/>
    <lineage>
        <taxon>Bacteria</taxon>
        <taxon>Bacillati</taxon>
        <taxon>Mycoplasmatota</taxon>
        <taxon>Mycoplasmoidales</taxon>
        <taxon>Mycoplasmoidaceae</taxon>
        <taxon>Mycoplasmoides</taxon>
    </lineage>
</organism>
<proteinExistence type="inferred from homology"/>
<gene>
    <name type="ordered locus">MG327</name>
</gene>
<protein>
    <recommendedName>
        <fullName>Putative esterase/lipase 2</fullName>
        <ecNumber>3.1.-.-</ecNumber>
    </recommendedName>
</protein>
<keyword id="KW-0378">Hydrolase</keyword>
<keyword id="KW-1185">Reference proteome</keyword>
<keyword id="KW-0719">Serine esterase</keyword>
<comment type="similarity">
    <text evidence="3">Belongs to the lipase/esterase LIP3/BchO family.</text>
</comment>
<reference key="1">
    <citation type="journal article" date="1995" name="Science">
        <title>The minimal gene complement of Mycoplasma genitalium.</title>
        <authorList>
            <person name="Fraser C.M."/>
            <person name="Gocayne J.D."/>
            <person name="White O."/>
            <person name="Adams M.D."/>
            <person name="Clayton R.A."/>
            <person name="Fleischmann R.D."/>
            <person name="Bult C.J."/>
            <person name="Kerlavage A.R."/>
            <person name="Sutton G.G."/>
            <person name="Kelley J.M."/>
            <person name="Fritchman J.L."/>
            <person name="Weidman J.F."/>
            <person name="Small K.V."/>
            <person name="Sandusky M."/>
            <person name="Fuhrmann J.L."/>
            <person name="Nguyen D.T."/>
            <person name="Utterback T.R."/>
            <person name="Saudek D.M."/>
            <person name="Phillips C.A."/>
            <person name="Merrick J.M."/>
            <person name="Tomb J.-F."/>
            <person name="Dougherty B.A."/>
            <person name="Bott K.F."/>
            <person name="Hu P.-C."/>
            <person name="Lucier T.S."/>
            <person name="Peterson S.N."/>
            <person name="Smith H.O."/>
            <person name="Hutchison C.A. III"/>
            <person name="Venter J.C."/>
        </authorList>
    </citation>
    <scope>NUCLEOTIDE SEQUENCE [LARGE SCALE GENOMIC DNA]</scope>
    <source>
        <strain>ATCC 33530 / DSM 19775 / NCTC 10195 / G37</strain>
    </source>
</reference>
<name>ESL2_MYCGE</name>
<evidence type="ECO:0000250" key="1"/>
<evidence type="ECO:0000255" key="2"/>
<evidence type="ECO:0000305" key="3"/>
<sequence>MLTSNKNTLFNSIFAFKPKKRKNVFIFLHGFGSEYASFSRIFSLFKKKKWPFFTFNFPGHGDNESTDTDQLKLNHFVDLVCDFIVQKKLNNVILIGHSMGGAVAVLVNKVIPLKIKALILVAPMNQTSFSVNKKRILDTFFKRNNSNHKDFVEHEEKRKSLLKIAINAFKKRTTFKTLYSDMVQNAKYGNDSLERAYEMIGNKPTLVILGANDIVTPTKASVDYLANKSDKIIFKVIDGVGHSPHDSAPKLFFDYVLEFLDNLKKQRY</sequence>
<dbReference type="EC" id="3.1.-.-"/>
<dbReference type="EMBL" id="L43967">
    <property type="protein sequence ID" value="AAC71551.1"/>
    <property type="molecule type" value="Genomic_DNA"/>
</dbReference>
<dbReference type="PIR" id="B64236">
    <property type="entry name" value="B64236"/>
</dbReference>
<dbReference type="RefSeq" id="WP_010869433.1">
    <property type="nucleotide sequence ID" value="NC_000908.2"/>
</dbReference>
<dbReference type="SMR" id="Q49418"/>
<dbReference type="FunCoup" id="Q49418">
    <property type="interactions" value="90"/>
</dbReference>
<dbReference type="STRING" id="243273.MG_327"/>
<dbReference type="ESTHER" id="mycge-esl2">
    <property type="family name" value="AlphaBeta_hydrolase"/>
</dbReference>
<dbReference type="GeneID" id="88282500"/>
<dbReference type="KEGG" id="mge:MG_327"/>
<dbReference type="eggNOG" id="COG2267">
    <property type="taxonomic scope" value="Bacteria"/>
</dbReference>
<dbReference type="HOGENOM" id="CLU_020336_41_1_14"/>
<dbReference type="InParanoid" id="Q49418"/>
<dbReference type="OrthoDB" id="403987at2"/>
<dbReference type="BioCyc" id="MGEN243273:G1GJ2-409-MONOMER"/>
<dbReference type="Proteomes" id="UP000000807">
    <property type="component" value="Chromosome"/>
</dbReference>
<dbReference type="GO" id="GO:0052689">
    <property type="term" value="F:carboxylic ester hydrolase activity"/>
    <property type="evidence" value="ECO:0007669"/>
    <property type="project" value="UniProtKB-KW"/>
</dbReference>
<dbReference type="Gene3D" id="3.40.50.1820">
    <property type="entry name" value="alpha/beta hydrolase"/>
    <property type="match status" value="1"/>
</dbReference>
<dbReference type="InterPro" id="IPR000073">
    <property type="entry name" value="AB_hydrolase_1"/>
</dbReference>
<dbReference type="InterPro" id="IPR029058">
    <property type="entry name" value="AB_hydrolase_fold"/>
</dbReference>
<dbReference type="InterPro" id="IPR050266">
    <property type="entry name" value="AB_hydrolase_sf"/>
</dbReference>
<dbReference type="InterPro" id="IPR022742">
    <property type="entry name" value="Hydrolase_4"/>
</dbReference>
<dbReference type="PANTHER" id="PTHR43798:SF33">
    <property type="entry name" value="HYDROLASE, PUTATIVE (AFU_ORTHOLOGUE AFUA_2G14860)-RELATED"/>
    <property type="match status" value="1"/>
</dbReference>
<dbReference type="PANTHER" id="PTHR43798">
    <property type="entry name" value="MONOACYLGLYCEROL LIPASE"/>
    <property type="match status" value="1"/>
</dbReference>
<dbReference type="Pfam" id="PF12146">
    <property type="entry name" value="Hydrolase_4"/>
    <property type="match status" value="1"/>
</dbReference>
<dbReference type="PRINTS" id="PR00111">
    <property type="entry name" value="ABHYDROLASE"/>
</dbReference>
<dbReference type="SUPFAM" id="SSF53474">
    <property type="entry name" value="alpha/beta-Hydrolases"/>
    <property type="match status" value="1"/>
</dbReference>
<feature type="chain" id="PRO_0000207076" description="Putative esterase/lipase 2">
    <location>
        <begin position="1"/>
        <end position="268"/>
    </location>
</feature>
<feature type="active site" evidence="2">
    <location>
        <position position="29"/>
    </location>
</feature>
<feature type="active site" description="Charge relay system" evidence="1">
    <location>
        <position position="98"/>
    </location>
</feature>
<accession>Q49418</accession>